<proteinExistence type="inferred from homology"/>
<protein>
    <recommendedName>
        <fullName evidence="1">Peptide chain release factor 1</fullName>
        <shortName evidence="1">RF-1</shortName>
    </recommendedName>
</protein>
<comment type="function">
    <text evidence="1">Peptide chain release factor 1 directs the termination of translation in response to the peptide chain termination codons UAG and UAA.</text>
</comment>
<comment type="subcellular location">
    <subcellularLocation>
        <location evidence="1">Cytoplasm</location>
    </subcellularLocation>
</comment>
<comment type="PTM">
    <text evidence="1">Methylated by PrmC. Methylation increases the termination efficiency of RF1.</text>
</comment>
<comment type="similarity">
    <text evidence="1">Belongs to the prokaryotic/mitochondrial release factor family.</text>
</comment>
<keyword id="KW-0963">Cytoplasm</keyword>
<keyword id="KW-0488">Methylation</keyword>
<keyword id="KW-0648">Protein biosynthesis</keyword>
<evidence type="ECO:0000255" key="1">
    <source>
        <dbReference type="HAMAP-Rule" id="MF_00093"/>
    </source>
</evidence>
<gene>
    <name evidence="1" type="primary">prfA</name>
    <name type="ordered locus">PFL_5159</name>
</gene>
<feature type="chain" id="PRO_0000263321" description="Peptide chain release factor 1">
    <location>
        <begin position="1"/>
        <end position="360"/>
    </location>
</feature>
<feature type="modified residue" description="N5-methylglutamine" evidence="1">
    <location>
        <position position="237"/>
    </location>
</feature>
<dbReference type="EMBL" id="CP000076">
    <property type="protein sequence ID" value="AAY94381.1"/>
    <property type="molecule type" value="Genomic_DNA"/>
</dbReference>
<dbReference type="RefSeq" id="WP_011063406.1">
    <property type="nucleotide sequence ID" value="NC_004129.6"/>
</dbReference>
<dbReference type="SMR" id="Q4K695"/>
<dbReference type="STRING" id="220664.PFL_5159"/>
<dbReference type="GeneID" id="57478116"/>
<dbReference type="KEGG" id="pfl:PFL_5159"/>
<dbReference type="PATRIC" id="fig|220664.5.peg.5272"/>
<dbReference type="eggNOG" id="COG0216">
    <property type="taxonomic scope" value="Bacteria"/>
</dbReference>
<dbReference type="HOGENOM" id="CLU_036856_0_1_6"/>
<dbReference type="Proteomes" id="UP000008540">
    <property type="component" value="Chromosome"/>
</dbReference>
<dbReference type="GO" id="GO:0005737">
    <property type="term" value="C:cytoplasm"/>
    <property type="evidence" value="ECO:0007669"/>
    <property type="project" value="UniProtKB-SubCell"/>
</dbReference>
<dbReference type="GO" id="GO:0016149">
    <property type="term" value="F:translation release factor activity, codon specific"/>
    <property type="evidence" value="ECO:0007669"/>
    <property type="project" value="UniProtKB-UniRule"/>
</dbReference>
<dbReference type="FunFam" id="3.30.160.20:FF:000004">
    <property type="entry name" value="Peptide chain release factor 1"/>
    <property type="match status" value="1"/>
</dbReference>
<dbReference type="FunFam" id="3.30.70.1660:FF:000002">
    <property type="entry name" value="Peptide chain release factor 1"/>
    <property type="match status" value="1"/>
</dbReference>
<dbReference type="FunFam" id="3.30.70.1660:FF:000004">
    <property type="entry name" value="Peptide chain release factor 1"/>
    <property type="match status" value="1"/>
</dbReference>
<dbReference type="Gene3D" id="3.30.160.20">
    <property type="match status" value="1"/>
</dbReference>
<dbReference type="Gene3D" id="3.30.70.1660">
    <property type="match status" value="1"/>
</dbReference>
<dbReference type="Gene3D" id="6.10.140.1950">
    <property type="match status" value="1"/>
</dbReference>
<dbReference type="HAMAP" id="MF_00093">
    <property type="entry name" value="Rel_fac_1"/>
    <property type="match status" value="1"/>
</dbReference>
<dbReference type="InterPro" id="IPR005139">
    <property type="entry name" value="PCRF"/>
</dbReference>
<dbReference type="InterPro" id="IPR000352">
    <property type="entry name" value="Pep_chain_release_fac_I"/>
</dbReference>
<dbReference type="InterPro" id="IPR045853">
    <property type="entry name" value="Pep_chain_release_fac_I_sf"/>
</dbReference>
<dbReference type="InterPro" id="IPR050057">
    <property type="entry name" value="Prokaryotic/Mito_RF"/>
</dbReference>
<dbReference type="InterPro" id="IPR004373">
    <property type="entry name" value="RF-1"/>
</dbReference>
<dbReference type="NCBIfam" id="TIGR00019">
    <property type="entry name" value="prfA"/>
    <property type="match status" value="1"/>
</dbReference>
<dbReference type="NCBIfam" id="NF001859">
    <property type="entry name" value="PRK00591.1"/>
    <property type="match status" value="1"/>
</dbReference>
<dbReference type="PANTHER" id="PTHR43804">
    <property type="entry name" value="LD18447P"/>
    <property type="match status" value="1"/>
</dbReference>
<dbReference type="PANTHER" id="PTHR43804:SF7">
    <property type="entry name" value="LD18447P"/>
    <property type="match status" value="1"/>
</dbReference>
<dbReference type="Pfam" id="PF03462">
    <property type="entry name" value="PCRF"/>
    <property type="match status" value="1"/>
</dbReference>
<dbReference type="Pfam" id="PF00472">
    <property type="entry name" value="RF-1"/>
    <property type="match status" value="1"/>
</dbReference>
<dbReference type="SMART" id="SM00937">
    <property type="entry name" value="PCRF"/>
    <property type="match status" value="1"/>
</dbReference>
<dbReference type="SUPFAM" id="SSF75620">
    <property type="entry name" value="Release factor"/>
    <property type="match status" value="1"/>
</dbReference>
<dbReference type="PROSITE" id="PS00745">
    <property type="entry name" value="RF_PROK_I"/>
    <property type="match status" value="1"/>
</dbReference>
<organism>
    <name type="scientific">Pseudomonas fluorescens (strain ATCC BAA-477 / NRRL B-23932 / Pf-5)</name>
    <dbReference type="NCBI Taxonomy" id="220664"/>
    <lineage>
        <taxon>Bacteria</taxon>
        <taxon>Pseudomonadati</taxon>
        <taxon>Pseudomonadota</taxon>
        <taxon>Gammaproteobacteria</taxon>
        <taxon>Pseudomonadales</taxon>
        <taxon>Pseudomonadaceae</taxon>
        <taxon>Pseudomonas</taxon>
    </lineage>
</organism>
<reference key="1">
    <citation type="journal article" date="2005" name="Nat. Biotechnol.">
        <title>Complete genome sequence of the plant commensal Pseudomonas fluorescens Pf-5.</title>
        <authorList>
            <person name="Paulsen I.T."/>
            <person name="Press C.M."/>
            <person name="Ravel J."/>
            <person name="Kobayashi D.Y."/>
            <person name="Myers G.S.A."/>
            <person name="Mavrodi D.V."/>
            <person name="DeBoy R.T."/>
            <person name="Seshadri R."/>
            <person name="Ren Q."/>
            <person name="Madupu R."/>
            <person name="Dodson R.J."/>
            <person name="Durkin A.S."/>
            <person name="Brinkac L.M."/>
            <person name="Daugherty S.C."/>
            <person name="Sullivan S.A."/>
            <person name="Rosovitz M.J."/>
            <person name="Gwinn M.L."/>
            <person name="Zhou L."/>
            <person name="Schneider D.J."/>
            <person name="Cartinhour S.W."/>
            <person name="Nelson W.C."/>
            <person name="Weidman J."/>
            <person name="Watkins K."/>
            <person name="Tran K."/>
            <person name="Khouri H."/>
            <person name="Pierson E.A."/>
            <person name="Pierson L.S. III"/>
            <person name="Thomashow L.S."/>
            <person name="Loper J.E."/>
        </authorList>
    </citation>
    <scope>NUCLEOTIDE SEQUENCE [LARGE SCALE GENOMIC DNA]</scope>
    <source>
        <strain>ATCC BAA-477 / NRRL B-23932 / Pf-5</strain>
    </source>
</reference>
<name>RF1_PSEF5</name>
<sequence length="360" mass="39924">MKASLLSKLDILQDRFEELTALLGDAEVISDQAKFRAYSKEYAEVEPIVATYKQVLKVQADLEGAQALLKDNDPDLREMAAEEVREAKEQLAELESSLQRMLLPKDPNDGRNVFLEIRAGTGGDEAAIFSGDLFRMYSRYAERRGWRLEILSENEGEHGGYKEVIARVEGESVYGKLKFESGAHRVQRVPATESQGRIHTSACTVAVLPEPDEQEAIEINPADLRIDTYRSSGAGGQHVNKTDSAIRITHIPSGIVVECQEERSQHKNRARAMSWLSAKLNDQQTSAAANAIASERKLLVGSGDRSERIRTYNFPQGRVTDHRINLTLYSLDEILAGGVEAVIEPLLAEYQADQLAALGE</sequence>
<accession>Q4K695</accession>